<proteinExistence type="evidence at protein level"/>
<dbReference type="EMBL" id="U00089">
    <property type="protein sequence ID" value="AAB96309.1"/>
    <property type="status" value="ALT_INIT"/>
    <property type="molecule type" value="Genomic_DNA"/>
</dbReference>
<dbReference type="PIR" id="S73987">
    <property type="entry name" value="S73987"/>
</dbReference>
<dbReference type="RefSeq" id="NP_109858.1">
    <property type="nucleotide sequence ID" value="NC_000912.1"/>
</dbReference>
<dbReference type="RefSeq" id="WP_015344888.1">
    <property type="nucleotide sequence ID" value="NC_000912.1"/>
</dbReference>
<dbReference type="PDB" id="7OOD">
    <property type="method" value="EM"/>
    <property type="resolution" value="3.40 A"/>
    <property type="chains" value="r=1-159"/>
</dbReference>
<dbReference type="PDB" id="7P6Z">
    <property type="method" value="EM"/>
    <property type="resolution" value="3.50 A"/>
    <property type="chains" value="r=1-159"/>
</dbReference>
<dbReference type="PDB" id="7PAH">
    <property type="method" value="EM"/>
    <property type="resolution" value="9.50 A"/>
    <property type="chains" value="r=1-159"/>
</dbReference>
<dbReference type="PDB" id="7PAI">
    <property type="method" value="EM"/>
    <property type="resolution" value="6.70 A"/>
    <property type="chains" value="r=1-159"/>
</dbReference>
<dbReference type="PDB" id="7PAJ">
    <property type="method" value="EM"/>
    <property type="resolution" value="7.30 A"/>
    <property type="chains" value="r=1-159"/>
</dbReference>
<dbReference type="PDB" id="7PAK">
    <property type="method" value="EM"/>
    <property type="resolution" value="5.30 A"/>
    <property type="chains" value="r=1-159"/>
</dbReference>
<dbReference type="PDB" id="7PAL">
    <property type="method" value="EM"/>
    <property type="resolution" value="4.70 A"/>
    <property type="chains" value="r=1-159"/>
</dbReference>
<dbReference type="PDB" id="7PAM">
    <property type="method" value="EM"/>
    <property type="resolution" value="6.80 A"/>
    <property type="chains" value="r=1-159"/>
</dbReference>
<dbReference type="PDB" id="7PAN">
    <property type="method" value="EM"/>
    <property type="resolution" value="9.70 A"/>
    <property type="chains" value="r=1-159"/>
</dbReference>
<dbReference type="PDB" id="7PAO">
    <property type="method" value="EM"/>
    <property type="resolution" value="7.00 A"/>
    <property type="chains" value="r=1-159"/>
</dbReference>
<dbReference type="PDB" id="7PAQ">
    <property type="method" value="EM"/>
    <property type="resolution" value="8.90 A"/>
    <property type="chains" value="r=1-159"/>
</dbReference>
<dbReference type="PDB" id="7PAR">
    <property type="method" value="EM"/>
    <property type="resolution" value="8.20 A"/>
    <property type="chains" value="r=1-159"/>
</dbReference>
<dbReference type="PDB" id="7PAS">
    <property type="method" value="EM"/>
    <property type="resolution" value="16.00 A"/>
    <property type="chains" value="r=1-159"/>
</dbReference>
<dbReference type="PDB" id="7PAT">
    <property type="method" value="EM"/>
    <property type="resolution" value="9.20 A"/>
    <property type="chains" value="r=1-159"/>
</dbReference>
<dbReference type="PDB" id="7PAU">
    <property type="method" value="EM"/>
    <property type="resolution" value="8.30 A"/>
    <property type="chains" value="r=1-159"/>
</dbReference>
<dbReference type="PDB" id="7PH9">
    <property type="method" value="EM"/>
    <property type="resolution" value="8.70 A"/>
    <property type="chains" value="r=1-159"/>
</dbReference>
<dbReference type="PDB" id="7PHA">
    <property type="method" value="EM"/>
    <property type="resolution" value="8.50 A"/>
    <property type="chains" value="r=1-159"/>
</dbReference>
<dbReference type="PDB" id="7PHB">
    <property type="method" value="EM"/>
    <property type="resolution" value="4.90 A"/>
    <property type="chains" value="r=1-159"/>
</dbReference>
<dbReference type="PDB" id="7PHC">
    <property type="method" value="EM"/>
    <property type="resolution" value="9.90 A"/>
    <property type="chains" value="r=1-159"/>
</dbReference>
<dbReference type="PDB" id="7PI8">
    <property type="method" value="EM"/>
    <property type="resolution" value="8.90 A"/>
    <property type="chains" value="r=1-159"/>
</dbReference>
<dbReference type="PDB" id="7PI9">
    <property type="method" value="EM"/>
    <property type="resolution" value="6.30 A"/>
    <property type="chains" value="r=1-159"/>
</dbReference>
<dbReference type="PDB" id="7PIA">
    <property type="method" value="EM"/>
    <property type="resolution" value="13.60 A"/>
    <property type="chains" value="r=1-159"/>
</dbReference>
<dbReference type="PDB" id="7PIB">
    <property type="method" value="EM"/>
    <property type="resolution" value="4.70 A"/>
    <property type="chains" value="r=1-159"/>
</dbReference>
<dbReference type="PDB" id="7PIC">
    <property type="method" value="EM"/>
    <property type="resolution" value="9.10 A"/>
    <property type="chains" value="r=1-159"/>
</dbReference>
<dbReference type="PDB" id="7PIO">
    <property type="method" value="EM"/>
    <property type="resolution" value="9.50 A"/>
    <property type="chains" value="r=1-159"/>
</dbReference>
<dbReference type="PDB" id="7PIP">
    <property type="method" value="EM"/>
    <property type="resolution" value="9.30 A"/>
    <property type="chains" value="r=1-159"/>
</dbReference>
<dbReference type="PDB" id="7PIQ">
    <property type="method" value="EM"/>
    <property type="resolution" value="9.70 A"/>
    <property type="chains" value="r=1-159"/>
</dbReference>
<dbReference type="PDB" id="7PIR">
    <property type="method" value="EM"/>
    <property type="resolution" value="12.10 A"/>
    <property type="chains" value="r=1-159"/>
</dbReference>
<dbReference type="PDB" id="7PIS">
    <property type="method" value="EM"/>
    <property type="resolution" value="15.00 A"/>
    <property type="chains" value="r=1-159"/>
</dbReference>
<dbReference type="PDB" id="7PIT">
    <property type="method" value="EM"/>
    <property type="resolution" value="5.70 A"/>
    <property type="chains" value="r=1-159"/>
</dbReference>
<dbReference type="PDB" id="8P7X">
    <property type="method" value="EM"/>
    <property type="resolution" value="3.03 A"/>
    <property type="chains" value="r=1-159"/>
</dbReference>
<dbReference type="PDB" id="8P7Y">
    <property type="method" value="EM"/>
    <property type="resolution" value="3.70 A"/>
    <property type="chains" value="r=1-159"/>
</dbReference>
<dbReference type="PDB" id="8P8B">
    <property type="method" value="EM"/>
    <property type="resolution" value="2.90 A"/>
    <property type="chains" value="r=1-159"/>
</dbReference>
<dbReference type="PDB" id="8P8V">
    <property type="method" value="EM"/>
    <property type="resolution" value="8.70 A"/>
    <property type="chains" value="r=1-159"/>
</dbReference>
<dbReference type="PDB" id="8P8W">
    <property type="method" value="EM"/>
    <property type="resolution" value="8.70 A"/>
    <property type="chains" value="r=1-159"/>
</dbReference>
<dbReference type="PDBsum" id="7OOD"/>
<dbReference type="PDBsum" id="7P6Z"/>
<dbReference type="PDBsum" id="7PAH"/>
<dbReference type="PDBsum" id="7PAI"/>
<dbReference type="PDBsum" id="7PAJ"/>
<dbReference type="PDBsum" id="7PAK"/>
<dbReference type="PDBsum" id="7PAL"/>
<dbReference type="PDBsum" id="7PAM"/>
<dbReference type="PDBsum" id="7PAN"/>
<dbReference type="PDBsum" id="7PAO"/>
<dbReference type="PDBsum" id="7PAQ"/>
<dbReference type="PDBsum" id="7PAR"/>
<dbReference type="PDBsum" id="7PAS"/>
<dbReference type="PDBsum" id="7PAT"/>
<dbReference type="PDBsum" id="7PAU"/>
<dbReference type="PDBsum" id="7PH9"/>
<dbReference type="PDBsum" id="7PHA"/>
<dbReference type="PDBsum" id="7PHB"/>
<dbReference type="PDBsum" id="7PHC"/>
<dbReference type="PDBsum" id="7PI8"/>
<dbReference type="PDBsum" id="7PI9"/>
<dbReference type="PDBsum" id="7PIA"/>
<dbReference type="PDBsum" id="7PIB"/>
<dbReference type="PDBsum" id="7PIC"/>
<dbReference type="PDBsum" id="7PIO"/>
<dbReference type="PDBsum" id="7PIP"/>
<dbReference type="PDBsum" id="7PIQ"/>
<dbReference type="PDBsum" id="7PIR"/>
<dbReference type="PDBsum" id="7PIS"/>
<dbReference type="PDBsum" id="7PIT"/>
<dbReference type="PDBsum" id="8P7X"/>
<dbReference type="PDBsum" id="8P7Y"/>
<dbReference type="PDBsum" id="8P8B"/>
<dbReference type="PDBsum" id="8P8V"/>
<dbReference type="PDBsum" id="8P8W"/>
<dbReference type="EMDB" id="EMD-13234"/>
<dbReference type="EMDB" id="EMD-13272"/>
<dbReference type="EMDB" id="EMD-13273"/>
<dbReference type="EMDB" id="EMD-13274"/>
<dbReference type="EMDB" id="EMD-13275"/>
<dbReference type="EMDB" id="EMD-13276"/>
<dbReference type="EMDB" id="EMD-13277"/>
<dbReference type="EMDB" id="EMD-13278"/>
<dbReference type="EMDB" id="EMD-13279"/>
<dbReference type="EMDB" id="EMD-13280"/>
<dbReference type="EMDB" id="EMD-13281"/>
<dbReference type="EMDB" id="EMD-13282"/>
<dbReference type="EMDB" id="EMD-13285"/>
<dbReference type="EMDB" id="EMD-13286"/>
<dbReference type="EMDB" id="EMD-13410"/>
<dbReference type="EMDB" id="EMD-13411"/>
<dbReference type="EMDB" id="EMD-13412"/>
<dbReference type="EMDB" id="EMD-13413"/>
<dbReference type="EMDB" id="EMD-13432"/>
<dbReference type="EMDB" id="EMD-13433"/>
<dbReference type="EMDB" id="EMD-13434"/>
<dbReference type="EMDB" id="EMD-13435"/>
<dbReference type="EMDB" id="EMD-13436"/>
<dbReference type="EMDB" id="EMD-13445"/>
<dbReference type="EMDB" id="EMD-13446"/>
<dbReference type="EMDB" id="EMD-13447"/>
<dbReference type="EMDB" id="EMD-13448"/>
<dbReference type="EMDB" id="EMD-13449"/>
<dbReference type="EMDB" id="EMD-13450"/>
<dbReference type="SMR" id="P75575"/>
<dbReference type="STRING" id="272634.MPN_170"/>
<dbReference type="EnsemblBacteria" id="AAB96309">
    <property type="protein sequence ID" value="AAB96309"/>
    <property type="gene ID" value="MPN_170"/>
</dbReference>
<dbReference type="KEGG" id="mpn:MPN_170"/>
<dbReference type="PATRIC" id="fig|272634.6.peg.188"/>
<dbReference type="HOGENOM" id="CLU_083987_3_3_14"/>
<dbReference type="OrthoDB" id="9805969at2"/>
<dbReference type="Proteomes" id="UP000000808">
    <property type="component" value="Chromosome"/>
</dbReference>
<dbReference type="GO" id="GO:0022625">
    <property type="term" value="C:cytosolic large ribosomal subunit"/>
    <property type="evidence" value="ECO:0007669"/>
    <property type="project" value="TreeGrafter"/>
</dbReference>
<dbReference type="GO" id="GO:0019843">
    <property type="term" value="F:rRNA binding"/>
    <property type="evidence" value="ECO:0007669"/>
    <property type="project" value="UniProtKB-UniRule"/>
</dbReference>
<dbReference type="GO" id="GO:0003735">
    <property type="term" value="F:structural constituent of ribosome"/>
    <property type="evidence" value="ECO:0007669"/>
    <property type="project" value="InterPro"/>
</dbReference>
<dbReference type="GO" id="GO:0046677">
    <property type="term" value="P:response to antibiotic"/>
    <property type="evidence" value="ECO:0007669"/>
    <property type="project" value="UniProtKB-KW"/>
</dbReference>
<dbReference type="GO" id="GO:0006412">
    <property type="term" value="P:translation"/>
    <property type="evidence" value="ECO:0007669"/>
    <property type="project" value="UniProtKB-UniRule"/>
</dbReference>
<dbReference type="CDD" id="cd00336">
    <property type="entry name" value="Ribosomal_L22"/>
    <property type="match status" value="1"/>
</dbReference>
<dbReference type="Gene3D" id="3.90.470.10">
    <property type="entry name" value="Ribosomal protein L22/L17"/>
    <property type="match status" value="1"/>
</dbReference>
<dbReference type="HAMAP" id="MF_01331_B">
    <property type="entry name" value="Ribosomal_uL22_B"/>
    <property type="match status" value="1"/>
</dbReference>
<dbReference type="InterPro" id="IPR001063">
    <property type="entry name" value="Ribosomal_uL22"/>
</dbReference>
<dbReference type="InterPro" id="IPR005727">
    <property type="entry name" value="Ribosomal_uL22_bac/chlpt-type"/>
</dbReference>
<dbReference type="InterPro" id="IPR047867">
    <property type="entry name" value="Ribosomal_uL22_bac/org-type"/>
</dbReference>
<dbReference type="InterPro" id="IPR018260">
    <property type="entry name" value="Ribosomal_uL22_CS"/>
</dbReference>
<dbReference type="InterPro" id="IPR036394">
    <property type="entry name" value="Ribosomal_uL22_sf"/>
</dbReference>
<dbReference type="NCBIfam" id="TIGR01044">
    <property type="entry name" value="rplV_bact"/>
    <property type="match status" value="1"/>
</dbReference>
<dbReference type="PANTHER" id="PTHR13501">
    <property type="entry name" value="CHLOROPLAST 50S RIBOSOMAL PROTEIN L22-RELATED"/>
    <property type="match status" value="1"/>
</dbReference>
<dbReference type="PANTHER" id="PTHR13501:SF8">
    <property type="entry name" value="LARGE RIBOSOMAL SUBUNIT PROTEIN UL22M"/>
    <property type="match status" value="1"/>
</dbReference>
<dbReference type="Pfam" id="PF00237">
    <property type="entry name" value="Ribosomal_L22"/>
    <property type="match status" value="1"/>
</dbReference>
<dbReference type="SUPFAM" id="SSF54843">
    <property type="entry name" value="Ribosomal protein L22"/>
    <property type="match status" value="1"/>
</dbReference>
<dbReference type="PROSITE" id="PS00464">
    <property type="entry name" value="RIBOSOMAL_L22"/>
    <property type="match status" value="1"/>
</dbReference>
<comment type="function">
    <text evidence="1">This protein binds specifically to 23S rRNA; its binding is stimulated by other ribosomal proteins, e.g. L4, L17, and L20. It is important during the early stages of 50S assembly. It makes multiple contacts with different domains of the 23S rRNA in the assembled 50S subunit and ribosome (By similarity).</text>
</comment>
<comment type="function">
    <text evidence="1">The globular domain of the protein is located near the polypeptide exit tunnel on the outside of the subunit, while an extended beta-hairpin is found that lines the wall of the exit tunnel in the center of the 70S ribosome.</text>
</comment>
<comment type="subunit">
    <text evidence="1">Part of the 50S ribosomal subunit.</text>
</comment>
<comment type="similarity">
    <text evidence="3">Belongs to the universal ribosomal protein uL22 family.</text>
</comment>
<comment type="caution">
    <text evidence="3">The antibiotic resistant variants could harbor other changes as the whole genes were not sequenced.</text>
</comment>
<comment type="sequence caution" evidence="3">
    <conflict type="erroneous initiation">
        <sequence resource="EMBL-CDS" id="AAB96309"/>
    </conflict>
</comment>
<keyword id="KW-0002">3D-structure</keyword>
<keyword id="KW-0046">Antibiotic resistance</keyword>
<keyword id="KW-1185">Reference proteome</keyword>
<keyword id="KW-0687">Ribonucleoprotein</keyword>
<keyword id="KW-0689">Ribosomal protein</keyword>
<keyword id="KW-0694">RNA-binding</keyword>
<keyword id="KW-0699">rRNA-binding</keyword>
<sequence>MIAFAKQFRVRISPQKARLVCQLIVGKKTADAQNILSNTPKKAATLIAKLLNSAIANATNNHGMNGDALYVFECVANQGPSMKRTIPRAKGSSNMITKRSSNLVVKLSDNPNERQELIKQQKALVKKRVEGQQKAKMARQKAVTSVVKAPSKTQGGVQK</sequence>
<name>RL22_MYCPN</name>
<reference key="1">
    <citation type="journal article" date="1996" name="Nucleic Acids Res.">
        <title>Complete sequence analysis of the genome of the bacterium Mycoplasma pneumoniae.</title>
        <authorList>
            <person name="Himmelreich R."/>
            <person name="Hilbert H."/>
            <person name="Plagens H."/>
            <person name="Pirkl E."/>
            <person name="Li B.-C."/>
            <person name="Herrmann R."/>
        </authorList>
    </citation>
    <scope>NUCLEOTIDE SEQUENCE [LARGE SCALE GENOMIC DNA]</scope>
    <source>
        <strain>ATCC 29342 / M129 / Subtype 1</strain>
    </source>
</reference>
<reference key="2">
    <citation type="journal article" date="2004" name="Antimicrob. Agents Chemother.">
        <title>In vitro selection and characterization of resistance to macrolides and related antibiotics in Mycoplasma pneumoniae.</title>
        <authorList>
            <person name="Pereyre S."/>
            <person name="Guyot C."/>
            <person name="Renaudin H."/>
            <person name="Charron A."/>
            <person name="Bebear C."/>
            <person name="Bebear C.M."/>
        </authorList>
    </citation>
    <scope>ANTIBIOTIC RESISTANT VARIANTS</scope>
    <source>
        <strain>ATCC 29342 / M129 / Subtype 1</strain>
    </source>
</reference>
<evidence type="ECO:0000250" key="1"/>
<evidence type="ECO:0000256" key="2">
    <source>
        <dbReference type="SAM" id="MobiDB-lite"/>
    </source>
</evidence>
<evidence type="ECO:0000305" key="3"/>
<evidence type="ECO:0007829" key="4">
    <source>
        <dbReference type="PDB" id="8P8B"/>
    </source>
</evidence>
<organism>
    <name type="scientific">Mycoplasma pneumoniae (strain ATCC 29342 / M129 / Subtype 1)</name>
    <name type="common">Mycoplasmoides pneumoniae</name>
    <dbReference type="NCBI Taxonomy" id="272634"/>
    <lineage>
        <taxon>Bacteria</taxon>
        <taxon>Bacillati</taxon>
        <taxon>Mycoplasmatota</taxon>
        <taxon>Mycoplasmoidales</taxon>
        <taxon>Mycoplasmoidaceae</taxon>
        <taxon>Mycoplasmoides</taxon>
    </lineage>
</organism>
<protein>
    <recommendedName>
        <fullName evidence="3">Large ribosomal subunit protein uL22</fullName>
    </recommendedName>
    <alternativeName>
        <fullName>50S ribosomal protein L22</fullName>
    </alternativeName>
</protein>
<feature type="chain" id="PRO_0000125184" description="Large ribosomal subunit protein uL22">
    <location>
        <begin position="1"/>
        <end position="159"/>
    </location>
</feature>
<feature type="region of interest" description="Disordered" evidence="2">
    <location>
        <begin position="129"/>
        <end position="159"/>
    </location>
</feature>
<feature type="sequence variant" description="After 48 telithromycin passages; confers resistance to various antibiotics in combination with a 23S rRNA mutation and protein L4 H70L.">
    <location>
        <begin position="111"/>
        <end position="114"/>
    </location>
</feature>
<feature type="sequence variant" description="After 37 telithromycin passages; confers resistance to various antibiotics in combination with R114T, a 23S rRNA mutation and protein L4 H70L; requires 2 nucleotide substitutions.">
    <original>N</original>
    <variation>R</variation>
    <location>
        <position position="112"/>
    </location>
</feature>
<feature type="sequence variant" description="After 20 and 32 telithromycin passages; confers resistance to various antibiotics in combination with a 23S rRNA mutation with and without protein L4 H70L.">
    <original>R</original>
    <variation>T</variation>
    <location>
        <position position="114"/>
    </location>
</feature>
<feature type="strand" evidence="4">
    <location>
        <begin position="2"/>
        <end position="12"/>
    </location>
</feature>
<feature type="helix" evidence="4">
    <location>
        <begin position="14"/>
        <end position="21"/>
    </location>
</feature>
<feature type="turn" evidence="4">
    <location>
        <begin position="22"/>
        <end position="26"/>
    </location>
</feature>
<feature type="helix" evidence="4">
    <location>
        <begin position="29"/>
        <end position="37"/>
    </location>
</feature>
<feature type="helix" evidence="4">
    <location>
        <begin position="42"/>
        <end position="44"/>
    </location>
</feature>
<feature type="helix" evidence="4">
    <location>
        <begin position="47"/>
        <end position="59"/>
    </location>
</feature>
<feature type="strand" evidence="4">
    <location>
        <begin position="66"/>
        <end position="68"/>
    </location>
</feature>
<feature type="strand" evidence="4">
    <location>
        <begin position="70"/>
        <end position="78"/>
    </location>
</feature>
<feature type="strand" evidence="4">
    <location>
        <begin position="82"/>
        <end position="87"/>
    </location>
</feature>
<feature type="strand" evidence="4">
    <location>
        <begin position="93"/>
        <end position="98"/>
    </location>
</feature>
<feature type="strand" evidence="4">
    <location>
        <begin position="101"/>
        <end position="109"/>
    </location>
</feature>
<feature type="helix" evidence="4">
    <location>
        <begin position="113"/>
        <end position="141"/>
    </location>
</feature>
<gene>
    <name type="primary">rplV</name>
    <name type="ordered locus">MPN_170</name>
    <name type="ORF">MP661</name>
</gene>
<accession>P75575</accession>